<accession>A3N3W1</accession>
<keyword id="KW-0028">Amino-acid biosynthesis</keyword>
<keyword id="KW-0963">Cytoplasm</keyword>
<keyword id="KW-0368">Histidine biosynthesis</keyword>
<keyword id="KW-0378">Hydrolase</keyword>
<keyword id="KW-0456">Lyase</keyword>
<keyword id="KW-0460">Magnesium</keyword>
<keyword id="KW-0479">Metal-binding</keyword>
<keyword id="KW-0511">Multifunctional enzyme</keyword>
<keyword id="KW-1185">Reference proteome</keyword>
<keyword id="KW-0862">Zinc</keyword>
<protein>
    <recommendedName>
        <fullName evidence="1">Histidine biosynthesis bifunctional protein HisB</fullName>
    </recommendedName>
    <domain>
        <recommendedName>
            <fullName evidence="1">Histidinol-phosphatase</fullName>
            <ecNumber evidence="1">3.1.3.15</ecNumber>
        </recommendedName>
    </domain>
    <domain>
        <recommendedName>
            <fullName evidence="1">Imidazoleglycerol-phosphate dehydratase</fullName>
            <shortName evidence="1">IGPD</shortName>
            <ecNumber evidence="1">4.2.1.19</ecNumber>
        </recommendedName>
    </domain>
</protein>
<proteinExistence type="inferred from homology"/>
<reference key="1">
    <citation type="journal article" date="2008" name="J. Bacteriol.">
        <title>The complete genome sequence of Actinobacillus pleuropneumoniae L20 (serotype 5b).</title>
        <authorList>
            <person name="Foote S.J."/>
            <person name="Bosse J.T."/>
            <person name="Bouevitch A.B."/>
            <person name="Langford P.R."/>
            <person name="Young N.M."/>
            <person name="Nash J.H.E."/>
        </authorList>
    </citation>
    <scope>NUCLEOTIDE SEQUENCE [LARGE SCALE GENOMIC DNA]</scope>
    <source>
        <strain>L20</strain>
    </source>
</reference>
<sequence length="363" mass="41284">MTQPTLFIDRDGTLIDEPKTDFQIDSLEKLKLERNVIPALLKLKDHYRFVMVSNQDGLGTSSFPQETFDKPHNAMMELFRSQGIEFDEVLICPHKPEDNCDCRKPKTKLLQKYIDRELFDPATSFVIGDRATDVQLAENLGIRALQYHPEKLNWDLIAEKLLGEAVTNIGDRQPRYAEVVRKTKETDIKVQVWLDETGVNDIKTGVGFFDHMLDQIATHGGFRMNISCKGDLWIDEHHTVEDTALALGTALKQAIGDKRGIARFGFVLPMDECQAQCAMDLSGRPFIKFKAEFKRDKVGDFSTELTEHFFQSIAFTMLATLHIKAKGDNDHHKIESLFKVFGRTLRQAIRIEGNELPSSKGVL</sequence>
<feature type="chain" id="PRO_0000319736" description="Histidine biosynthesis bifunctional protein HisB">
    <location>
        <begin position="1"/>
        <end position="363"/>
    </location>
</feature>
<feature type="region of interest" description="Histidinol-phosphatase" evidence="1">
    <location>
        <begin position="1"/>
        <end position="174"/>
    </location>
</feature>
<feature type="region of interest" description="Imidazoleglycerol-phosphate dehydratase" evidence="1">
    <location>
        <begin position="175"/>
        <end position="363"/>
    </location>
</feature>
<feature type="active site" description="Nucleophile" evidence="1">
    <location>
        <position position="9"/>
    </location>
</feature>
<feature type="active site" description="Proton donor" evidence="1">
    <location>
        <position position="11"/>
    </location>
</feature>
<feature type="binding site" evidence="1">
    <location>
        <position position="9"/>
    </location>
    <ligand>
        <name>Mg(2+)</name>
        <dbReference type="ChEBI" id="CHEBI:18420"/>
    </ligand>
</feature>
<feature type="binding site" evidence="1">
    <location>
        <position position="11"/>
    </location>
    <ligand>
        <name>Mg(2+)</name>
        <dbReference type="ChEBI" id="CHEBI:18420"/>
    </ligand>
</feature>
<feature type="binding site" evidence="1">
    <location>
        <position position="92"/>
    </location>
    <ligand>
        <name>Zn(2+)</name>
        <dbReference type="ChEBI" id="CHEBI:29105"/>
    </ligand>
</feature>
<feature type="binding site" evidence="1">
    <location>
        <position position="94"/>
    </location>
    <ligand>
        <name>Zn(2+)</name>
        <dbReference type="ChEBI" id="CHEBI:29105"/>
    </ligand>
</feature>
<feature type="binding site" evidence="1">
    <location>
        <position position="100"/>
    </location>
    <ligand>
        <name>Zn(2+)</name>
        <dbReference type="ChEBI" id="CHEBI:29105"/>
    </ligand>
</feature>
<feature type="binding site" evidence="1">
    <location>
        <position position="102"/>
    </location>
    <ligand>
        <name>Zn(2+)</name>
        <dbReference type="ChEBI" id="CHEBI:29105"/>
    </ligand>
</feature>
<feature type="binding site" evidence="1">
    <location>
        <position position="129"/>
    </location>
    <ligand>
        <name>Mg(2+)</name>
        <dbReference type="ChEBI" id="CHEBI:18420"/>
    </ligand>
</feature>
<evidence type="ECO:0000255" key="1">
    <source>
        <dbReference type="HAMAP-Rule" id="MF_01022"/>
    </source>
</evidence>
<comment type="catalytic activity">
    <reaction evidence="1">
        <text>D-erythro-1-(imidazol-4-yl)glycerol 3-phosphate = 3-(imidazol-4-yl)-2-oxopropyl phosphate + H2O</text>
        <dbReference type="Rhea" id="RHEA:11040"/>
        <dbReference type="ChEBI" id="CHEBI:15377"/>
        <dbReference type="ChEBI" id="CHEBI:57766"/>
        <dbReference type="ChEBI" id="CHEBI:58278"/>
        <dbReference type="EC" id="4.2.1.19"/>
    </reaction>
</comment>
<comment type="catalytic activity">
    <reaction evidence="1">
        <text>L-histidinol phosphate + H2O = L-histidinol + phosphate</text>
        <dbReference type="Rhea" id="RHEA:14465"/>
        <dbReference type="ChEBI" id="CHEBI:15377"/>
        <dbReference type="ChEBI" id="CHEBI:43474"/>
        <dbReference type="ChEBI" id="CHEBI:57699"/>
        <dbReference type="ChEBI" id="CHEBI:57980"/>
        <dbReference type="EC" id="3.1.3.15"/>
    </reaction>
</comment>
<comment type="cofactor">
    <cofactor evidence="1">
        <name>Mg(2+)</name>
        <dbReference type="ChEBI" id="CHEBI:18420"/>
    </cofactor>
</comment>
<comment type="cofactor">
    <cofactor evidence="1">
        <name>Zn(2+)</name>
        <dbReference type="ChEBI" id="CHEBI:29105"/>
    </cofactor>
</comment>
<comment type="pathway">
    <text evidence="1">Amino-acid biosynthesis; L-histidine biosynthesis; L-histidine from 5-phospho-alpha-D-ribose 1-diphosphate: step 6/9.</text>
</comment>
<comment type="pathway">
    <text evidence="1">Amino-acid biosynthesis; L-histidine biosynthesis; L-histidine from 5-phospho-alpha-D-ribose 1-diphosphate: step 8/9.</text>
</comment>
<comment type="subcellular location">
    <subcellularLocation>
        <location evidence="1">Cytoplasm</location>
    </subcellularLocation>
</comment>
<comment type="similarity">
    <text evidence="1">In the N-terminal section; belongs to the histidinol-phosphatase family.</text>
</comment>
<comment type="similarity">
    <text evidence="1">In the C-terminal section; belongs to the imidazoleglycerol-phosphate dehydratase family.</text>
</comment>
<dbReference type="EC" id="3.1.3.15" evidence="1"/>
<dbReference type="EC" id="4.2.1.19" evidence="1"/>
<dbReference type="EMBL" id="CP000569">
    <property type="protein sequence ID" value="ABN75097.1"/>
    <property type="molecule type" value="Genomic_DNA"/>
</dbReference>
<dbReference type="RefSeq" id="WP_005606171.1">
    <property type="nucleotide sequence ID" value="NC_009053.1"/>
</dbReference>
<dbReference type="SMR" id="A3N3W1"/>
<dbReference type="STRING" id="416269.APL_2023"/>
<dbReference type="EnsemblBacteria" id="ABN75097">
    <property type="protein sequence ID" value="ABN75097"/>
    <property type="gene ID" value="APL_2023"/>
</dbReference>
<dbReference type="KEGG" id="apl:APL_2023"/>
<dbReference type="eggNOG" id="COG0131">
    <property type="taxonomic scope" value="Bacteria"/>
</dbReference>
<dbReference type="eggNOG" id="COG0241">
    <property type="taxonomic scope" value="Bacteria"/>
</dbReference>
<dbReference type="HOGENOM" id="CLU_044308_0_0_6"/>
<dbReference type="UniPathway" id="UPA00031">
    <property type="reaction ID" value="UER00011"/>
</dbReference>
<dbReference type="UniPathway" id="UPA00031">
    <property type="reaction ID" value="UER00013"/>
</dbReference>
<dbReference type="Proteomes" id="UP000001432">
    <property type="component" value="Chromosome"/>
</dbReference>
<dbReference type="GO" id="GO:0005737">
    <property type="term" value="C:cytoplasm"/>
    <property type="evidence" value="ECO:0007669"/>
    <property type="project" value="UniProtKB-SubCell"/>
</dbReference>
<dbReference type="GO" id="GO:0004401">
    <property type="term" value="F:histidinol-phosphatase activity"/>
    <property type="evidence" value="ECO:0007669"/>
    <property type="project" value="UniProtKB-UniRule"/>
</dbReference>
<dbReference type="GO" id="GO:0004424">
    <property type="term" value="F:imidazoleglycerol-phosphate dehydratase activity"/>
    <property type="evidence" value="ECO:0007669"/>
    <property type="project" value="UniProtKB-UniRule"/>
</dbReference>
<dbReference type="GO" id="GO:0046872">
    <property type="term" value="F:metal ion binding"/>
    <property type="evidence" value="ECO:0007669"/>
    <property type="project" value="UniProtKB-KW"/>
</dbReference>
<dbReference type="GO" id="GO:0000105">
    <property type="term" value="P:L-histidine biosynthetic process"/>
    <property type="evidence" value="ECO:0007669"/>
    <property type="project" value="UniProtKB-UniRule"/>
</dbReference>
<dbReference type="CDD" id="cd07503">
    <property type="entry name" value="HAD_HisB-N"/>
    <property type="match status" value="1"/>
</dbReference>
<dbReference type="CDD" id="cd07914">
    <property type="entry name" value="IGPD"/>
    <property type="match status" value="1"/>
</dbReference>
<dbReference type="FunFam" id="3.40.50.1000:FF:000061">
    <property type="entry name" value="Histidine biosynthesis bifunctional protein HisB"/>
    <property type="match status" value="1"/>
</dbReference>
<dbReference type="FunFam" id="3.30.230.40:FF:000001">
    <property type="entry name" value="Imidazoleglycerol-phosphate dehydratase HisB"/>
    <property type="match status" value="1"/>
</dbReference>
<dbReference type="FunFam" id="3.30.230.40:FF:000003">
    <property type="entry name" value="Imidazoleglycerol-phosphate dehydratase HisB"/>
    <property type="match status" value="1"/>
</dbReference>
<dbReference type="Gene3D" id="3.40.50.1000">
    <property type="entry name" value="HAD superfamily/HAD-like"/>
    <property type="match status" value="1"/>
</dbReference>
<dbReference type="Gene3D" id="3.30.230.40">
    <property type="entry name" value="Imidazole glycerol phosphate dehydratase, domain 1"/>
    <property type="match status" value="2"/>
</dbReference>
<dbReference type="HAMAP" id="MF_01022">
    <property type="entry name" value="Bifunc_HisB"/>
    <property type="match status" value="1"/>
</dbReference>
<dbReference type="HAMAP" id="MF_00076">
    <property type="entry name" value="HisB"/>
    <property type="match status" value="1"/>
</dbReference>
<dbReference type="InterPro" id="IPR036412">
    <property type="entry name" value="HAD-like_sf"/>
</dbReference>
<dbReference type="InterPro" id="IPR006549">
    <property type="entry name" value="HAD-SF_hydro_IIIA"/>
</dbReference>
<dbReference type="InterPro" id="IPR023214">
    <property type="entry name" value="HAD_sf"/>
</dbReference>
<dbReference type="InterPro" id="IPR020566">
    <property type="entry name" value="His_synth_bifunc_HisB"/>
</dbReference>
<dbReference type="InterPro" id="IPR005954">
    <property type="entry name" value="HisB_N"/>
</dbReference>
<dbReference type="InterPro" id="IPR006543">
    <property type="entry name" value="Histidinol-phos"/>
</dbReference>
<dbReference type="InterPro" id="IPR038494">
    <property type="entry name" value="IGPD_sf"/>
</dbReference>
<dbReference type="InterPro" id="IPR000807">
    <property type="entry name" value="ImidazoleglycerolP_deHydtase"/>
</dbReference>
<dbReference type="InterPro" id="IPR020565">
    <property type="entry name" value="ImidazoleglycerP_deHydtase_CS"/>
</dbReference>
<dbReference type="InterPro" id="IPR020568">
    <property type="entry name" value="Ribosomal_Su5_D2-typ_SF"/>
</dbReference>
<dbReference type="NCBIfam" id="TIGR01662">
    <property type="entry name" value="HAD-SF-IIIA"/>
    <property type="match status" value="1"/>
</dbReference>
<dbReference type="NCBIfam" id="TIGR01261">
    <property type="entry name" value="hisB_Nterm"/>
    <property type="match status" value="1"/>
</dbReference>
<dbReference type="NCBIfam" id="TIGR01656">
    <property type="entry name" value="Histidinol-ppas"/>
    <property type="match status" value="1"/>
</dbReference>
<dbReference type="NCBIfam" id="NF002111">
    <property type="entry name" value="PRK00951.2-1"/>
    <property type="match status" value="1"/>
</dbReference>
<dbReference type="NCBIfam" id="NF002114">
    <property type="entry name" value="PRK00951.2-4"/>
    <property type="match status" value="1"/>
</dbReference>
<dbReference type="NCBIfam" id="NF003937">
    <property type="entry name" value="PRK05446.1"/>
    <property type="match status" value="1"/>
</dbReference>
<dbReference type="PANTHER" id="PTHR23133:SF2">
    <property type="entry name" value="IMIDAZOLEGLYCEROL-PHOSPHATE DEHYDRATASE"/>
    <property type="match status" value="1"/>
</dbReference>
<dbReference type="PANTHER" id="PTHR23133">
    <property type="entry name" value="IMIDAZOLEGLYCEROL-PHOSPHATE DEHYDRATASE HIS7"/>
    <property type="match status" value="1"/>
</dbReference>
<dbReference type="Pfam" id="PF13242">
    <property type="entry name" value="Hydrolase_like"/>
    <property type="match status" value="1"/>
</dbReference>
<dbReference type="Pfam" id="PF00475">
    <property type="entry name" value="IGPD"/>
    <property type="match status" value="1"/>
</dbReference>
<dbReference type="SUPFAM" id="SSF56784">
    <property type="entry name" value="HAD-like"/>
    <property type="match status" value="1"/>
</dbReference>
<dbReference type="SUPFAM" id="SSF54211">
    <property type="entry name" value="Ribosomal protein S5 domain 2-like"/>
    <property type="match status" value="2"/>
</dbReference>
<dbReference type="PROSITE" id="PS00954">
    <property type="entry name" value="IGP_DEHYDRATASE_1"/>
    <property type="match status" value="1"/>
</dbReference>
<dbReference type="PROSITE" id="PS00955">
    <property type="entry name" value="IGP_DEHYDRATASE_2"/>
    <property type="match status" value="1"/>
</dbReference>
<organism>
    <name type="scientific">Actinobacillus pleuropneumoniae serotype 5b (strain L20)</name>
    <dbReference type="NCBI Taxonomy" id="416269"/>
    <lineage>
        <taxon>Bacteria</taxon>
        <taxon>Pseudomonadati</taxon>
        <taxon>Pseudomonadota</taxon>
        <taxon>Gammaproteobacteria</taxon>
        <taxon>Pasteurellales</taxon>
        <taxon>Pasteurellaceae</taxon>
        <taxon>Actinobacillus</taxon>
    </lineage>
</organism>
<gene>
    <name evidence="1" type="primary">hisB</name>
    <name type="ordered locus">APL_2023</name>
</gene>
<name>HIS7_ACTP2</name>